<sequence length="156" mass="17802">MRRRKAPVREVLPDPIYGNKIITKFINSLMYDGKKSVATEIMYGAIKAIEKKNAEVKGIDVFNDAIENVKPILEVKSRRVGGATYQVPVEVRPARQQALAIRWLITFARKRSERTMVDKLANELLDAANSKGASFKKKEDTYKMAEANKAFAHYRW</sequence>
<keyword id="KW-0687">Ribonucleoprotein</keyword>
<keyword id="KW-0689">Ribosomal protein</keyword>
<keyword id="KW-0694">RNA-binding</keyword>
<keyword id="KW-0699">rRNA-binding</keyword>
<keyword id="KW-0820">tRNA-binding</keyword>
<feature type="chain" id="PRO_1000014165" description="Small ribosomal subunit protein uS7">
    <location>
        <begin position="1"/>
        <end position="156"/>
    </location>
</feature>
<evidence type="ECO:0000255" key="1">
    <source>
        <dbReference type="HAMAP-Rule" id="MF_00480"/>
    </source>
</evidence>
<evidence type="ECO:0000305" key="2"/>
<accession>A7ZCP1</accession>
<organism>
    <name type="scientific">Campylobacter concisus (strain 13826)</name>
    <dbReference type="NCBI Taxonomy" id="360104"/>
    <lineage>
        <taxon>Bacteria</taxon>
        <taxon>Pseudomonadati</taxon>
        <taxon>Campylobacterota</taxon>
        <taxon>Epsilonproteobacteria</taxon>
        <taxon>Campylobacterales</taxon>
        <taxon>Campylobacteraceae</taxon>
        <taxon>Campylobacter</taxon>
    </lineage>
</organism>
<reference key="1">
    <citation type="submission" date="2007-10" db="EMBL/GenBank/DDBJ databases">
        <title>Genome sequence of Campylobacter concisus 13826 isolated from human feces.</title>
        <authorList>
            <person name="Fouts D.E."/>
            <person name="Mongodin E.F."/>
            <person name="Puiu D."/>
            <person name="Sebastian Y."/>
            <person name="Miller W.G."/>
            <person name="Mandrell R.E."/>
            <person name="On S."/>
            <person name="Nelson K.E."/>
        </authorList>
    </citation>
    <scope>NUCLEOTIDE SEQUENCE [LARGE SCALE GENOMIC DNA]</scope>
    <source>
        <strain>13826</strain>
    </source>
</reference>
<dbReference type="EMBL" id="CP000792">
    <property type="protein sequence ID" value="EAT97376.1"/>
    <property type="molecule type" value="Genomic_DNA"/>
</dbReference>
<dbReference type="RefSeq" id="WP_002941142.1">
    <property type="nucleotide sequence ID" value="NC_009802.2"/>
</dbReference>
<dbReference type="SMR" id="A7ZCP1"/>
<dbReference type="STRING" id="360104.CCC13826_0180"/>
<dbReference type="KEGG" id="cco:CCC13826_0180"/>
<dbReference type="eggNOG" id="COG0049">
    <property type="taxonomic scope" value="Bacteria"/>
</dbReference>
<dbReference type="HOGENOM" id="CLU_072226_1_1_7"/>
<dbReference type="OrthoDB" id="9807653at2"/>
<dbReference type="Proteomes" id="UP000001121">
    <property type="component" value="Chromosome"/>
</dbReference>
<dbReference type="GO" id="GO:0015935">
    <property type="term" value="C:small ribosomal subunit"/>
    <property type="evidence" value="ECO:0007669"/>
    <property type="project" value="InterPro"/>
</dbReference>
<dbReference type="GO" id="GO:0019843">
    <property type="term" value="F:rRNA binding"/>
    <property type="evidence" value="ECO:0007669"/>
    <property type="project" value="UniProtKB-UniRule"/>
</dbReference>
<dbReference type="GO" id="GO:0003735">
    <property type="term" value="F:structural constituent of ribosome"/>
    <property type="evidence" value="ECO:0007669"/>
    <property type="project" value="InterPro"/>
</dbReference>
<dbReference type="GO" id="GO:0000049">
    <property type="term" value="F:tRNA binding"/>
    <property type="evidence" value="ECO:0007669"/>
    <property type="project" value="UniProtKB-UniRule"/>
</dbReference>
<dbReference type="GO" id="GO:0006412">
    <property type="term" value="P:translation"/>
    <property type="evidence" value="ECO:0007669"/>
    <property type="project" value="UniProtKB-UniRule"/>
</dbReference>
<dbReference type="CDD" id="cd14869">
    <property type="entry name" value="uS7_Bacteria"/>
    <property type="match status" value="1"/>
</dbReference>
<dbReference type="FunFam" id="1.10.455.10:FF:000001">
    <property type="entry name" value="30S ribosomal protein S7"/>
    <property type="match status" value="1"/>
</dbReference>
<dbReference type="Gene3D" id="1.10.455.10">
    <property type="entry name" value="Ribosomal protein S7 domain"/>
    <property type="match status" value="1"/>
</dbReference>
<dbReference type="HAMAP" id="MF_00480_B">
    <property type="entry name" value="Ribosomal_uS7_B"/>
    <property type="match status" value="1"/>
</dbReference>
<dbReference type="InterPro" id="IPR000235">
    <property type="entry name" value="Ribosomal_uS7"/>
</dbReference>
<dbReference type="InterPro" id="IPR005717">
    <property type="entry name" value="Ribosomal_uS7_bac/org-type"/>
</dbReference>
<dbReference type="InterPro" id="IPR020606">
    <property type="entry name" value="Ribosomal_uS7_CS"/>
</dbReference>
<dbReference type="InterPro" id="IPR023798">
    <property type="entry name" value="Ribosomal_uS7_dom"/>
</dbReference>
<dbReference type="InterPro" id="IPR036823">
    <property type="entry name" value="Ribosomal_uS7_dom_sf"/>
</dbReference>
<dbReference type="NCBIfam" id="TIGR01029">
    <property type="entry name" value="rpsG_bact"/>
    <property type="match status" value="1"/>
</dbReference>
<dbReference type="PANTHER" id="PTHR11205">
    <property type="entry name" value="RIBOSOMAL PROTEIN S7"/>
    <property type="match status" value="1"/>
</dbReference>
<dbReference type="Pfam" id="PF00177">
    <property type="entry name" value="Ribosomal_S7"/>
    <property type="match status" value="1"/>
</dbReference>
<dbReference type="PIRSF" id="PIRSF002122">
    <property type="entry name" value="RPS7p_RPS7a_RPS5e_RPS7o"/>
    <property type="match status" value="1"/>
</dbReference>
<dbReference type="SUPFAM" id="SSF47973">
    <property type="entry name" value="Ribosomal protein S7"/>
    <property type="match status" value="1"/>
</dbReference>
<dbReference type="PROSITE" id="PS00052">
    <property type="entry name" value="RIBOSOMAL_S7"/>
    <property type="match status" value="1"/>
</dbReference>
<protein>
    <recommendedName>
        <fullName evidence="1">Small ribosomal subunit protein uS7</fullName>
    </recommendedName>
    <alternativeName>
        <fullName evidence="2">30S ribosomal protein S7</fullName>
    </alternativeName>
</protein>
<comment type="function">
    <text evidence="1">One of the primary rRNA binding proteins, it binds directly to 16S rRNA where it nucleates assembly of the head domain of the 30S subunit. Is located at the subunit interface close to the decoding center, probably blocks exit of the E-site tRNA.</text>
</comment>
<comment type="subunit">
    <text evidence="1">Part of the 30S ribosomal subunit. Contacts proteins S9 and S11.</text>
</comment>
<comment type="similarity">
    <text evidence="1">Belongs to the universal ribosomal protein uS7 family.</text>
</comment>
<gene>
    <name evidence="1" type="primary">rpsG</name>
    <name type="ordered locus">Ccon26_06670</name>
    <name type="ORF">CCC13826_0180</name>
</gene>
<proteinExistence type="inferred from homology"/>
<name>RS7_CAMC1</name>